<feature type="chain" id="PRO_0000286839" description="Ribonuclease J 1">
    <location>
        <begin position="1"/>
        <end position="565"/>
    </location>
</feature>
<feature type="binding site" evidence="2">
    <location>
        <position position="74"/>
    </location>
    <ligand>
        <name>Zn(2+)</name>
        <dbReference type="ChEBI" id="CHEBI:29105"/>
        <label>1</label>
        <note>catalytic</note>
    </ligand>
</feature>
<feature type="binding site" evidence="2">
    <location>
        <position position="76"/>
    </location>
    <ligand>
        <name>Zn(2+)</name>
        <dbReference type="ChEBI" id="CHEBI:29105"/>
        <label>1</label>
        <note>catalytic</note>
    </ligand>
</feature>
<feature type="binding site" evidence="2">
    <location>
        <position position="78"/>
    </location>
    <ligand>
        <name>Zn(2+)</name>
        <dbReference type="ChEBI" id="CHEBI:29105"/>
        <label>2</label>
        <note>catalytic</note>
    </ligand>
</feature>
<feature type="binding site" evidence="2">
    <location>
        <position position="79"/>
    </location>
    <ligand>
        <name>Zn(2+)</name>
        <dbReference type="ChEBI" id="CHEBI:29105"/>
        <label>2</label>
        <note>catalytic</note>
    </ligand>
</feature>
<feature type="binding site" evidence="2">
    <location>
        <position position="142"/>
    </location>
    <ligand>
        <name>Zn(2+)</name>
        <dbReference type="ChEBI" id="CHEBI:29105"/>
        <label>1</label>
        <note>catalytic</note>
    </ligand>
</feature>
<feature type="binding site" evidence="2">
    <location>
        <position position="164"/>
    </location>
    <ligand>
        <name>Zn(2+)</name>
        <dbReference type="ChEBI" id="CHEBI:29105"/>
        <label>1</label>
        <note>catalytic</note>
    </ligand>
</feature>
<feature type="binding site" evidence="2">
    <location>
        <position position="164"/>
    </location>
    <ligand>
        <name>Zn(2+)</name>
        <dbReference type="ChEBI" id="CHEBI:29105"/>
        <label>2</label>
        <note>catalytic</note>
    </ligand>
</feature>
<feature type="binding site" evidence="2">
    <location>
        <begin position="364"/>
        <end position="368"/>
    </location>
    <ligand>
        <name>substrate</name>
    </ligand>
</feature>
<feature type="binding site" evidence="2">
    <location>
        <position position="390"/>
    </location>
    <ligand>
        <name>Zn(2+)</name>
        <dbReference type="ChEBI" id="CHEBI:29105"/>
        <label>2</label>
        <note>catalytic</note>
    </ligand>
</feature>
<proteinExistence type="inferred from homology"/>
<dbReference type="EC" id="3.1.-.-" evidence="2"/>
<dbReference type="EMBL" id="AJ938182">
    <property type="protein sequence ID" value="CAI80643.1"/>
    <property type="molecule type" value="Genomic_DNA"/>
</dbReference>
<dbReference type="RefSeq" id="WP_000811379.1">
    <property type="nucleotide sequence ID" value="NC_007622.1"/>
</dbReference>
<dbReference type="SMR" id="Q2YX35"/>
<dbReference type="KEGG" id="sab:SAB0955c"/>
<dbReference type="HOGENOM" id="CLU_008727_3_1_9"/>
<dbReference type="GO" id="GO:0005737">
    <property type="term" value="C:cytoplasm"/>
    <property type="evidence" value="ECO:0007669"/>
    <property type="project" value="UniProtKB-SubCell"/>
</dbReference>
<dbReference type="GO" id="GO:0004534">
    <property type="term" value="F:5'-3' RNA exonuclease activity"/>
    <property type="evidence" value="ECO:0007669"/>
    <property type="project" value="UniProtKB-UniRule"/>
</dbReference>
<dbReference type="GO" id="GO:0003723">
    <property type="term" value="F:RNA binding"/>
    <property type="evidence" value="ECO:0007669"/>
    <property type="project" value="UniProtKB-UniRule"/>
</dbReference>
<dbReference type="GO" id="GO:0004521">
    <property type="term" value="F:RNA endonuclease activity"/>
    <property type="evidence" value="ECO:0007669"/>
    <property type="project" value="UniProtKB-UniRule"/>
</dbReference>
<dbReference type="GO" id="GO:0008270">
    <property type="term" value="F:zinc ion binding"/>
    <property type="evidence" value="ECO:0007669"/>
    <property type="project" value="InterPro"/>
</dbReference>
<dbReference type="GO" id="GO:0006364">
    <property type="term" value="P:rRNA processing"/>
    <property type="evidence" value="ECO:0007669"/>
    <property type="project" value="UniProtKB-UniRule"/>
</dbReference>
<dbReference type="CDD" id="cd07714">
    <property type="entry name" value="RNaseJ_MBL-fold"/>
    <property type="match status" value="1"/>
</dbReference>
<dbReference type="FunFam" id="3.10.20.580:FF:000001">
    <property type="entry name" value="Ribonuclease J"/>
    <property type="match status" value="1"/>
</dbReference>
<dbReference type="Gene3D" id="3.10.20.580">
    <property type="match status" value="1"/>
</dbReference>
<dbReference type="Gene3D" id="3.40.50.10710">
    <property type="entry name" value="Metallo-hydrolase/oxidoreductase"/>
    <property type="match status" value="1"/>
</dbReference>
<dbReference type="Gene3D" id="3.60.15.10">
    <property type="entry name" value="Ribonuclease Z/Hydroxyacylglutathione hydrolase-like"/>
    <property type="match status" value="1"/>
</dbReference>
<dbReference type="HAMAP" id="MF_01491">
    <property type="entry name" value="RNase_J_bact"/>
    <property type="match status" value="1"/>
</dbReference>
<dbReference type="InterPro" id="IPR001279">
    <property type="entry name" value="Metallo-B-lactamas"/>
</dbReference>
<dbReference type="InterPro" id="IPR036866">
    <property type="entry name" value="RibonucZ/Hydroxyglut_hydro"/>
</dbReference>
<dbReference type="InterPro" id="IPR011108">
    <property type="entry name" value="RMMBL"/>
</dbReference>
<dbReference type="InterPro" id="IPR004613">
    <property type="entry name" value="RNase_J"/>
</dbReference>
<dbReference type="InterPro" id="IPR042173">
    <property type="entry name" value="RNase_J_2"/>
</dbReference>
<dbReference type="InterPro" id="IPR055132">
    <property type="entry name" value="RNase_J_b_CASP"/>
</dbReference>
<dbReference type="InterPro" id="IPR030854">
    <property type="entry name" value="RNase_J_bac"/>
</dbReference>
<dbReference type="InterPro" id="IPR041636">
    <property type="entry name" value="RNase_J_C"/>
</dbReference>
<dbReference type="InterPro" id="IPR001587">
    <property type="entry name" value="RNase_J_CS"/>
</dbReference>
<dbReference type="NCBIfam" id="TIGR00649">
    <property type="entry name" value="MG423"/>
    <property type="match status" value="1"/>
</dbReference>
<dbReference type="NCBIfam" id="NF047419">
    <property type="entry name" value="RNase_J1_RnjA"/>
    <property type="match status" value="1"/>
</dbReference>
<dbReference type="PANTHER" id="PTHR43694">
    <property type="entry name" value="RIBONUCLEASE J"/>
    <property type="match status" value="1"/>
</dbReference>
<dbReference type="PANTHER" id="PTHR43694:SF1">
    <property type="entry name" value="RIBONUCLEASE J"/>
    <property type="match status" value="1"/>
</dbReference>
<dbReference type="Pfam" id="PF00753">
    <property type="entry name" value="Lactamase_B"/>
    <property type="match status" value="1"/>
</dbReference>
<dbReference type="Pfam" id="PF07521">
    <property type="entry name" value="RMMBL"/>
    <property type="match status" value="1"/>
</dbReference>
<dbReference type="Pfam" id="PF22505">
    <property type="entry name" value="RNase_J_b_CASP"/>
    <property type="match status" value="1"/>
</dbReference>
<dbReference type="Pfam" id="PF17770">
    <property type="entry name" value="RNase_J_C"/>
    <property type="match status" value="1"/>
</dbReference>
<dbReference type="PIRSF" id="PIRSF004803">
    <property type="entry name" value="RnjA"/>
    <property type="match status" value="1"/>
</dbReference>
<dbReference type="SMART" id="SM00849">
    <property type="entry name" value="Lactamase_B"/>
    <property type="match status" value="1"/>
</dbReference>
<dbReference type="SUPFAM" id="SSF56281">
    <property type="entry name" value="Metallo-hydrolase/oxidoreductase"/>
    <property type="match status" value="1"/>
</dbReference>
<dbReference type="PROSITE" id="PS01292">
    <property type="entry name" value="UPF0036"/>
    <property type="match status" value="1"/>
</dbReference>
<keyword id="KW-0963">Cytoplasm</keyword>
<keyword id="KW-0255">Endonuclease</keyword>
<keyword id="KW-0269">Exonuclease</keyword>
<keyword id="KW-0378">Hydrolase</keyword>
<keyword id="KW-0479">Metal-binding</keyword>
<keyword id="KW-0540">Nuclease</keyword>
<keyword id="KW-0694">RNA-binding</keyword>
<keyword id="KW-0698">rRNA processing</keyword>
<keyword id="KW-0862">Zinc</keyword>
<organism>
    <name type="scientific">Staphylococcus aureus (strain bovine RF122 / ET3-1)</name>
    <dbReference type="NCBI Taxonomy" id="273036"/>
    <lineage>
        <taxon>Bacteria</taxon>
        <taxon>Bacillati</taxon>
        <taxon>Bacillota</taxon>
        <taxon>Bacilli</taxon>
        <taxon>Bacillales</taxon>
        <taxon>Staphylococcaceae</taxon>
        <taxon>Staphylococcus</taxon>
    </lineage>
</organism>
<name>RNJ1_STAAB</name>
<comment type="function">
    <text evidence="1">An RNase that has 5'-3' exonuclease and possibly endoonuclease activity. Involved in maturation of rRNA and in some organisms also mRNA maturation and/or decay (By similarity).</text>
</comment>
<comment type="cofactor">
    <cofactor evidence="2">
        <name>Zn(2+)</name>
        <dbReference type="ChEBI" id="CHEBI:29105"/>
    </cofactor>
    <text evidence="2">Binds up to 2 Zn(2+) ions per subunit. It is not clear if Zn(2+) or Mg(2+) is physiologically important.</text>
</comment>
<comment type="subunit">
    <text evidence="2">Homodimer, may be a subunit of the RNA degradosome.</text>
</comment>
<comment type="subcellular location">
    <subcellularLocation>
        <location evidence="2">Cytoplasm</location>
    </subcellularLocation>
</comment>
<comment type="similarity">
    <text evidence="2">Belongs to the metallo-beta-lactamase superfamily. RNA-metabolizing metallo-beta-lactamase-like family. Bacterial RNase J subfamily.</text>
</comment>
<reference key="1">
    <citation type="journal article" date="2007" name="PLoS ONE">
        <title>Molecular correlates of host specialization in Staphylococcus aureus.</title>
        <authorList>
            <person name="Herron-Olson L."/>
            <person name="Fitzgerald J.R."/>
            <person name="Musser J.M."/>
            <person name="Kapur V."/>
        </authorList>
    </citation>
    <scope>NUCLEOTIDE SEQUENCE [LARGE SCALE GENOMIC DNA]</scope>
    <source>
        <strain>bovine RF122 / ET3-1</strain>
    </source>
</reference>
<gene>
    <name evidence="2" type="primary">rnj1</name>
    <name type="ordered locus">SAB0955c</name>
</gene>
<protein>
    <recommendedName>
        <fullName evidence="2">Ribonuclease J 1</fullName>
        <shortName evidence="2">RNase J1</shortName>
        <ecNumber evidence="2">3.1.-.-</ecNumber>
    </recommendedName>
</protein>
<sequence length="565" mass="62635">MKQLHPNEVGVYALGGLGEIGKNTYAVEYKDEIVIIDAGIKFPDDNLLGIDYVIPDYTYLVQNQDKIVGLFITHGHEDHIGGVPFLLKQLNIPIYGGPLALGLIRNKLEEHHLLRTAKLNEINEDSVIKSKHLTISFYLTTHSIPETYGVIVDTPEGKVVHTGDFKFDFTPVGKPANIAKMAQLGEEGVLCLLSDSTNSLVPDFTLSEREVGQNVDKIFRNCKGRIIFATFASNIYRVQQAVEAAIKNNRKIVTFGRSMENNIKIGMELGYIKAPPETFIEPNKINTVPKHELLILCTGSQGEPMAALSRIANGTHKQIKIIPEDTVVFSSSPIPGNTKSINRTINSLYKAGADVIHSKISNIHTSGHGSQGDQQLMLRLIKPKYFLPIHGEYRMLKAHGETGVECGVEEDNVFIFDIGDVLALTHDSARKAGRIPSGNVLVDGSGIGDIGNVVIRDRKLLSEEGLVIVVVSIDFNTNKLLSGPDIISRGFVYMRESGQLIYDAQRKIKTDVISKLNQNKDIQWHQIKSSIIETLQPYLFEKTARKPMILPVIMKVNEQKESNNK</sequence>
<accession>Q2YX35</accession>
<evidence type="ECO:0000250" key="1"/>
<evidence type="ECO:0000255" key="2">
    <source>
        <dbReference type="HAMAP-Rule" id="MF_01491"/>
    </source>
</evidence>